<dbReference type="EC" id="2.6.1.16" evidence="1"/>
<dbReference type="EMBL" id="BA000016">
    <property type="protein sequence ID" value="BAB82033.1"/>
    <property type="molecule type" value="Genomic_DNA"/>
</dbReference>
<dbReference type="RefSeq" id="WP_011010878.1">
    <property type="nucleotide sequence ID" value="NC_003366.1"/>
</dbReference>
<dbReference type="SMR" id="Q8XHZ7"/>
<dbReference type="STRING" id="195102.gene:10491644"/>
<dbReference type="KEGG" id="cpe:CPE2327"/>
<dbReference type="HOGENOM" id="CLU_012520_5_2_9"/>
<dbReference type="Proteomes" id="UP000000818">
    <property type="component" value="Chromosome"/>
</dbReference>
<dbReference type="GO" id="GO:0005829">
    <property type="term" value="C:cytosol"/>
    <property type="evidence" value="ECO:0007669"/>
    <property type="project" value="TreeGrafter"/>
</dbReference>
<dbReference type="GO" id="GO:0097367">
    <property type="term" value="F:carbohydrate derivative binding"/>
    <property type="evidence" value="ECO:0007669"/>
    <property type="project" value="InterPro"/>
</dbReference>
<dbReference type="GO" id="GO:0004360">
    <property type="term" value="F:glutamine-fructose-6-phosphate transaminase (isomerizing) activity"/>
    <property type="evidence" value="ECO:0007669"/>
    <property type="project" value="UniProtKB-UniRule"/>
</dbReference>
<dbReference type="GO" id="GO:0005975">
    <property type="term" value="P:carbohydrate metabolic process"/>
    <property type="evidence" value="ECO:0007669"/>
    <property type="project" value="UniProtKB-UniRule"/>
</dbReference>
<dbReference type="GO" id="GO:0006002">
    <property type="term" value="P:fructose 6-phosphate metabolic process"/>
    <property type="evidence" value="ECO:0007669"/>
    <property type="project" value="TreeGrafter"/>
</dbReference>
<dbReference type="GO" id="GO:0006487">
    <property type="term" value="P:protein N-linked glycosylation"/>
    <property type="evidence" value="ECO:0007669"/>
    <property type="project" value="TreeGrafter"/>
</dbReference>
<dbReference type="GO" id="GO:0006047">
    <property type="term" value="P:UDP-N-acetylglucosamine metabolic process"/>
    <property type="evidence" value="ECO:0007669"/>
    <property type="project" value="TreeGrafter"/>
</dbReference>
<dbReference type="CDD" id="cd00714">
    <property type="entry name" value="GFAT"/>
    <property type="match status" value="1"/>
</dbReference>
<dbReference type="CDD" id="cd05008">
    <property type="entry name" value="SIS_GlmS_GlmD_1"/>
    <property type="match status" value="1"/>
</dbReference>
<dbReference type="CDD" id="cd05009">
    <property type="entry name" value="SIS_GlmS_GlmD_2"/>
    <property type="match status" value="1"/>
</dbReference>
<dbReference type="FunFam" id="3.40.50.10490:FF:000001">
    <property type="entry name" value="Glutamine--fructose-6-phosphate aminotransferase [isomerizing]"/>
    <property type="match status" value="1"/>
</dbReference>
<dbReference type="FunFam" id="3.60.20.10:FF:000006">
    <property type="entry name" value="Glutamine--fructose-6-phosphate aminotransferase [isomerizing]"/>
    <property type="match status" value="1"/>
</dbReference>
<dbReference type="Gene3D" id="3.40.50.10490">
    <property type="entry name" value="Glucose-6-phosphate isomerase like protein, domain 1"/>
    <property type="match status" value="2"/>
</dbReference>
<dbReference type="Gene3D" id="3.60.20.10">
    <property type="entry name" value="Glutamine Phosphoribosylpyrophosphate, subunit 1, domain 1"/>
    <property type="match status" value="1"/>
</dbReference>
<dbReference type="HAMAP" id="MF_00164">
    <property type="entry name" value="GlmS"/>
    <property type="match status" value="1"/>
</dbReference>
<dbReference type="InterPro" id="IPR017932">
    <property type="entry name" value="GATase_2_dom"/>
</dbReference>
<dbReference type="InterPro" id="IPR005855">
    <property type="entry name" value="GFAT"/>
</dbReference>
<dbReference type="InterPro" id="IPR047084">
    <property type="entry name" value="GFAT_N"/>
</dbReference>
<dbReference type="InterPro" id="IPR035466">
    <property type="entry name" value="GlmS/AgaS_SIS"/>
</dbReference>
<dbReference type="InterPro" id="IPR035490">
    <property type="entry name" value="GlmS/FrlB_SIS"/>
</dbReference>
<dbReference type="InterPro" id="IPR029055">
    <property type="entry name" value="Ntn_hydrolases_N"/>
</dbReference>
<dbReference type="InterPro" id="IPR001347">
    <property type="entry name" value="SIS_dom"/>
</dbReference>
<dbReference type="InterPro" id="IPR046348">
    <property type="entry name" value="SIS_dom_sf"/>
</dbReference>
<dbReference type="NCBIfam" id="TIGR01135">
    <property type="entry name" value="glmS"/>
    <property type="match status" value="1"/>
</dbReference>
<dbReference type="NCBIfam" id="NF001484">
    <property type="entry name" value="PRK00331.1"/>
    <property type="match status" value="1"/>
</dbReference>
<dbReference type="PANTHER" id="PTHR10937">
    <property type="entry name" value="GLUCOSAMINE--FRUCTOSE-6-PHOSPHATE AMINOTRANSFERASE, ISOMERIZING"/>
    <property type="match status" value="1"/>
</dbReference>
<dbReference type="PANTHER" id="PTHR10937:SF0">
    <property type="entry name" value="GLUTAMINE--FRUCTOSE-6-PHOSPHATE TRANSAMINASE (ISOMERIZING)"/>
    <property type="match status" value="1"/>
</dbReference>
<dbReference type="Pfam" id="PF13522">
    <property type="entry name" value="GATase_6"/>
    <property type="match status" value="1"/>
</dbReference>
<dbReference type="Pfam" id="PF01380">
    <property type="entry name" value="SIS"/>
    <property type="match status" value="2"/>
</dbReference>
<dbReference type="SUPFAM" id="SSF56235">
    <property type="entry name" value="N-terminal nucleophile aminohydrolases (Ntn hydrolases)"/>
    <property type="match status" value="1"/>
</dbReference>
<dbReference type="SUPFAM" id="SSF53697">
    <property type="entry name" value="SIS domain"/>
    <property type="match status" value="1"/>
</dbReference>
<dbReference type="PROSITE" id="PS51278">
    <property type="entry name" value="GATASE_TYPE_2"/>
    <property type="match status" value="1"/>
</dbReference>
<dbReference type="PROSITE" id="PS51464">
    <property type="entry name" value="SIS"/>
    <property type="match status" value="2"/>
</dbReference>
<reference key="1">
    <citation type="journal article" date="2002" name="Proc. Natl. Acad. Sci. U.S.A.">
        <title>Complete genome sequence of Clostridium perfringens, an anaerobic flesh-eater.</title>
        <authorList>
            <person name="Shimizu T."/>
            <person name="Ohtani K."/>
            <person name="Hirakawa H."/>
            <person name="Ohshima K."/>
            <person name="Yamashita A."/>
            <person name="Shiba T."/>
            <person name="Ogasawara N."/>
            <person name="Hattori M."/>
            <person name="Kuhara S."/>
            <person name="Hayashi H."/>
        </authorList>
    </citation>
    <scope>NUCLEOTIDE SEQUENCE [LARGE SCALE GENOMIC DNA]</scope>
    <source>
        <strain>13 / Type A</strain>
    </source>
</reference>
<gene>
    <name evidence="1" type="primary">glmS</name>
    <name type="ordered locus">CPE2327</name>
</gene>
<proteinExistence type="inferred from homology"/>
<comment type="function">
    <text evidence="1">Catalyzes the first step in hexosamine metabolism, converting fructose-6P into glucosamine-6P using glutamine as a nitrogen source.</text>
</comment>
<comment type="catalytic activity">
    <reaction evidence="1">
        <text>D-fructose 6-phosphate + L-glutamine = D-glucosamine 6-phosphate + L-glutamate</text>
        <dbReference type="Rhea" id="RHEA:13237"/>
        <dbReference type="ChEBI" id="CHEBI:29985"/>
        <dbReference type="ChEBI" id="CHEBI:58359"/>
        <dbReference type="ChEBI" id="CHEBI:58725"/>
        <dbReference type="ChEBI" id="CHEBI:61527"/>
        <dbReference type="EC" id="2.6.1.16"/>
    </reaction>
</comment>
<comment type="subunit">
    <text evidence="1">Homodimer.</text>
</comment>
<comment type="subcellular location">
    <subcellularLocation>
        <location evidence="1">Cytoplasm</location>
    </subcellularLocation>
</comment>
<keyword id="KW-0032">Aminotransferase</keyword>
<keyword id="KW-0963">Cytoplasm</keyword>
<keyword id="KW-0315">Glutamine amidotransferase</keyword>
<keyword id="KW-1185">Reference proteome</keyword>
<keyword id="KW-0677">Repeat</keyword>
<keyword id="KW-0808">Transferase</keyword>
<feature type="initiator methionine" description="Removed" evidence="1">
    <location>
        <position position="1"/>
    </location>
</feature>
<feature type="chain" id="PRO_0000135323" description="Glutamine--fructose-6-phosphate aminotransferase [isomerizing]">
    <location>
        <begin position="2"/>
        <end position="610"/>
    </location>
</feature>
<feature type="domain" description="Glutamine amidotransferase type-2" evidence="1">
    <location>
        <begin position="2"/>
        <end position="217"/>
    </location>
</feature>
<feature type="domain" description="SIS 1" evidence="1">
    <location>
        <begin position="284"/>
        <end position="424"/>
    </location>
</feature>
<feature type="domain" description="SIS 2" evidence="1">
    <location>
        <begin position="453"/>
        <end position="600"/>
    </location>
</feature>
<feature type="active site" description="Nucleophile; for GATase activity" evidence="1">
    <location>
        <position position="2"/>
    </location>
</feature>
<feature type="active site" description="For Fru-6P isomerization activity" evidence="1">
    <location>
        <position position="605"/>
    </location>
</feature>
<organism>
    <name type="scientific">Clostridium perfringens (strain 13 / Type A)</name>
    <dbReference type="NCBI Taxonomy" id="195102"/>
    <lineage>
        <taxon>Bacteria</taxon>
        <taxon>Bacillati</taxon>
        <taxon>Bacillota</taxon>
        <taxon>Clostridia</taxon>
        <taxon>Eubacteriales</taxon>
        <taxon>Clostridiaceae</taxon>
        <taxon>Clostridium</taxon>
    </lineage>
</organism>
<evidence type="ECO:0000255" key="1">
    <source>
        <dbReference type="HAMAP-Rule" id="MF_00164"/>
    </source>
</evidence>
<name>GLMS_CLOPE</name>
<sequence length="610" mass="67804">MCGIVGYVGQKKATDILVEGLSKLEYRGYDSAGVAVLEDNKIKAEKHKGRLANLEGMLNENPIEGGIGIGHTRWATHGEPSDVNSHPHLNNKETIAVVHNGIIENYNELRNWLMEKGYEFKSETDTEVIPNLVDFYYKGDLLDAVMEATKHMEGSYAIGVICNDEPEKLVAVRKDSPLIVGLGEKEYFIASDIPAVLNHTREVYLLEDKEFVVLTNDGVTLFDEEKNPVEKEVYHITWNVDAAEKGGYEDFMLKEINEQPKAIKDTMTSRIMEEKEVTLDDISITKEYLDNVDRVYIVACGTAYHAGVIGKYAIEKLVRIPVEVDIASEFRYRDAVITDKTLIIVLSQSGETADTLAVLRDGQAKGARVLAVTNVVGSSVSREANDVLYTWAGPEIAVASTKAYVTQLIAMYTLALHFAELKGSKSVEEIEEIKKAMLELPEKVEEILKNTDLIKEFAVKASTEKDLYFLGRGMDYGVAMEGSLKLKEISYIHSEAYAGGELKHGPIALIEKDIPVISLLTQRELMDKMISNVQEVVTRGANVLGVCFKGDMEESKRKMFEGLIEIPETLSLLSPVLSVVPLQLFSYYVAKAKGFDVDKPRNLAKSVTVE</sequence>
<accession>Q8XHZ7</accession>
<protein>
    <recommendedName>
        <fullName evidence="1">Glutamine--fructose-6-phosphate aminotransferase [isomerizing]</fullName>
        <ecNumber evidence="1">2.6.1.16</ecNumber>
    </recommendedName>
    <alternativeName>
        <fullName evidence="1">D-fructose-6-phosphate amidotransferase</fullName>
    </alternativeName>
    <alternativeName>
        <fullName evidence="1">GFAT</fullName>
    </alternativeName>
    <alternativeName>
        <fullName evidence="1">Glucosamine-6-phosphate synthase</fullName>
    </alternativeName>
    <alternativeName>
        <fullName evidence="1">Hexosephosphate aminotransferase</fullName>
    </alternativeName>
    <alternativeName>
        <fullName evidence="1">L-glutamine--D-fructose-6-phosphate amidotransferase</fullName>
    </alternativeName>
</protein>